<keyword id="KW-0067">ATP-binding</keyword>
<keyword id="KW-0414">Isoprene biosynthesis</keyword>
<keyword id="KW-0418">Kinase</keyword>
<keyword id="KW-0547">Nucleotide-binding</keyword>
<keyword id="KW-1185">Reference proteome</keyword>
<keyword id="KW-0808">Transferase</keyword>
<comment type="function">
    <text evidence="1">Catalyzes the phosphorylation of the position 2 hydroxy group of 4-diphosphocytidyl-2C-methyl-D-erythritol.</text>
</comment>
<comment type="catalytic activity">
    <reaction evidence="1">
        <text>4-CDP-2-C-methyl-D-erythritol + ATP = 4-CDP-2-C-methyl-D-erythritol 2-phosphate + ADP + H(+)</text>
        <dbReference type="Rhea" id="RHEA:18437"/>
        <dbReference type="ChEBI" id="CHEBI:15378"/>
        <dbReference type="ChEBI" id="CHEBI:30616"/>
        <dbReference type="ChEBI" id="CHEBI:57823"/>
        <dbReference type="ChEBI" id="CHEBI:57919"/>
        <dbReference type="ChEBI" id="CHEBI:456216"/>
        <dbReference type="EC" id="2.7.1.148"/>
    </reaction>
</comment>
<comment type="pathway">
    <text evidence="1">Isoprenoid biosynthesis; isopentenyl diphosphate biosynthesis via DXP pathway; isopentenyl diphosphate from 1-deoxy-D-xylulose 5-phosphate: step 3/6.</text>
</comment>
<comment type="similarity">
    <text evidence="1">Belongs to the GHMP kinase family. IspE subfamily.</text>
</comment>
<comment type="sequence caution" evidence="2">
    <conflict type="erroneous initiation">
        <sequence resource="EMBL-CDS" id="ABC43997"/>
    </conflict>
</comment>
<evidence type="ECO:0000255" key="1">
    <source>
        <dbReference type="HAMAP-Rule" id="MF_00061"/>
    </source>
</evidence>
<evidence type="ECO:0000305" key="2"/>
<protein>
    <recommendedName>
        <fullName evidence="1">4-diphosphocytidyl-2-C-methyl-D-erythritol kinase</fullName>
        <shortName evidence="1">CMK</shortName>
        <ecNumber evidence="1">2.7.1.148</ecNumber>
    </recommendedName>
    <alternativeName>
        <fullName evidence="1">4-(cytidine-5'-diphospho)-2-C-methyl-D-erythritol kinase</fullName>
    </alternativeName>
</protein>
<reference key="1">
    <citation type="journal article" date="2005" name="Proc. Natl. Acad. Sci. U.S.A.">
        <title>The genome of Salinibacter ruber: convergence and gene exchange among hyperhalophilic bacteria and archaea.</title>
        <authorList>
            <person name="Mongodin E.F."/>
            <person name="Nelson K.E."/>
            <person name="Daugherty S."/>
            <person name="DeBoy R.T."/>
            <person name="Wister J."/>
            <person name="Khouri H."/>
            <person name="Weidman J."/>
            <person name="Walsh D.A."/>
            <person name="Papke R.T."/>
            <person name="Sanchez Perez G."/>
            <person name="Sharma A.K."/>
            <person name="Nesbo C.L."/>
            <person name="MacLeod D."/>
            <person name="Bapteste E."/>
            <person name="Doolittle W.F."/>
            <person name="Charlebois R.L."/>
            <person name="Legault B."/>
            <person name="Rodriguez-Valera F."/>
        </authorList>
    </citation>
    <scope>NUCLEOTIDE SEQUENCE [LARGE SCALE GENOMIC DNA]</scope>
    <source>
        <strain>DSM 13855 / CECT 5946 / M31</strain>
    </source>
</reference>
<proteinExistence type="inferred from homology"/>
<name>ISPE_SALRD</name>
<sequence>MPLAQDAPAKINLGLHVLRRRPDGYHDIETVLHRIDWADTITATPADTLSLTCSDPSLPTDRDNLCLQAAHRLASACDVPAGADLHLEKRVPYGAGLGSGSSDAAATLRLLARLWDVDPTSETLQEIGRTIGADVPFFLQDAPAAYATGRGDTLSPLSKDGASYRLPFSLLIAVPSAEIATPWAYDRVTPAEANRPDLRRLVLSNDLSRWDEALTNDFAPPVTTAIPAVDAARTALRATDAACVSLSGSGSAVYGLFEETAAARAALQSLKPRDLRTHLMPAPN</sequence>
<dbReference type="EC" id="2.7.1.148" evidence="1"/>
<dbReference type="EMBL" id="CP000159">
    <property type="protein sequence ID" value="ABC43997.1"/>
    <property type="status" value="ALT_INIT"/>
    <property type="molecule type" value="Genomic_DNA"/>
</dbReference>
<dbReference type="RefSeq" id="WP_164923490.1">
    <property type="nucleotide sequence ID" value="NC_007677.1"/>
</dbReference>
<dbReference type="RefSeq" id="YP_444827.1">
    <property type="nucleotide sequence ID" value="NC_007677.1"/>
</dbReference>
<dbReference type="SMR" id="Q2S4Q4"/>
<dbReference type="STRING" id="309807.SRU_0689"/>
<dbReference type="EnsemblBacteria" id="ABC43997">
    <property type="protein sequence ID" value="ABC43997"/>
    <property type="gene ID" value="SRU_0689"/>
</dbReference>
<dbReference type="KEGG" id="sru:SRU_0689"/>
<dbReference type="PATRIC" id="fig|309807.25.peg.708"/>
<dbReference type="eggNOG" id="COG1947">
    <property type="taxonomic scope" value="Bacteria"/>
</dbReference>
<dbReference type="HOGENOM" id="CLU_053057_2_0_10"/>
<dbReference type="OrthoDB" id="9809438at2"/>
<dbReference type="UniPathway" id="UPA00056">
    <property type="reaction ID" value="UER00094"/>
</dbReference>
<dbReference type="Proteomes" id="UP000008674">
    <property type="component" value="Chromosome"/>
</dbReference>
<dbReference type="GO" id="GO:0050515">
    <property type="term" value="F:4-(cytidine 5'-diphospho)-2-C-methyl-D-erythritol kinase activity"/>
    <property type="evidence" value="ECO:0007669"/>
    <property type="project" value="UniProtKB-UniRule"/>
</dbReference>
<dbReference type="GO" id="GO:0005524">
    <property type="term" value="F:ATP binding"/>
    <property type="evidence" value="ECO:0007669"/>
    <property type="project" value="UniProtKB-UniRule"/>
</dbReference>
<dbReference type="GO" id="GO:0019288">
    <property type="term" value="P:isopentenyl diphosphate biosynthetic process, methylerythritol 4-phosphate pathway"/>
    <property type="evidence" value="ECO:0007669"/>
    <property type="project" value="UniProtKB-UniRule"/>
</dbReference>
<dbReference type="GO" id="GO:0016114">
    <property type="term" value="P:terpenoid biosynthetic process"/>
    <property type="evidence" value="ECO:0007669"/>
    <property type="project" value="InterPro"/>
</dbReference>
<dbReference type="Gene3D" id="3.30.230.10">
    <property type="match status" value="1"/>
</dbReference>
<dbReference type="Gene3D" id="3.30.70.890">
    <property type="entry name" value="GHMP kinase, C-terminal domain"/>
    <property type="match status" value="1"/>
</dbReference>
<dbReference type="HAMAP" id="MF_00061">
    <property type="entry name" value="IspE"/>
    <property type="match status" value="1"/>
</dbReference>
<dbReference type="InterPro" id="IPR013750">
    <property type="entry name" value="GHMP_kinase_C_dom"/>
</dbReference>
<dbReference type="InterPro" id="IPR036554">
    <property type="entry name" value="GHMP_kinase_C_sf"/>
</dbReference>
<dbReference type="InterPro" id="IPR006204">
    <property type="entry name" value="GHMP_kinase_N_dom"/>
</dbReference>
<dbReference type="InterPro" id="IPR004424">
    <property type="entry name" value="IspE"/>
</dbReference>
<dbReference type="InterPro" id="IPR020568">
    <property type="entry name" value="Ribosomal_Su5_D2-typ_SF"/>
</dbReference>
<dbReference type="InterPro" id="IPR014721">
    <property type="entry name" value="Ribsml_uS5_D2-typ_fold_subgr"/>
</dbReference>
<dbReference type="NCBIfam" id="TIGR00154">
    <property type="entry name" value="ispE"/>
    <property type="match status" value="1"/>
</dbReference>
<dbReference type="PANTHER" id="PTHR43527">
    <property type="entry name" value="4-DIPHOSPHOCYTIDYL-2-C-METHYL-D-ERYTHRITOL KINASE, CHLOROPLASTIC"/>
    <property type="match status" value="1"/>
</dbReference>
<dbReference type="PANTHER" id="PTHR43527:SF2">
    <property type="entry name" value="4-DIPHOSPHOCYTIDYL-2-C-METHYL-D-ERYTHRITOL KINASE, CHLOROPLASTIC"/>
    <property type="match status" value="1"/>
</dbReference>
<dbReference type="Pfam" id="PF08544">
    <property type="entry name" value="GHMP_kinases_C"/>
    <property type="match status" value="1"/>
</dbReference>
<dbReference type="Pfam" id="PF00288">
    <property type="entry name" value="GHMP_kinases_N"/>
    <property type="match status" value="1"/>
</dbReference>
<dbReference type="PIRSF" id="PIRSF010376">
    <property type="entry name" value="IspE"/>
    <property type="match status" value="1"/>
</dbReference>
<dbReference type="SUPFAM" id="SSF55060">
    <property type="entry name" value="GHMP Kinase, C-terminal domain"/>
    <property type="match status" value="1"/>
</dbReference>
<dbReference type="SUPFAM" id="SSF54211">
    <property type="entry name" value="Ribosomal protein S5 domain 2-like"/>
    <property type="match status" value="1"/>
</dbReference>
<feature type="chain" id="PRO_0000235126" description="4-diphosphocytidyl-2-C-methyl-D-erythritol kinase">
    <location>
        <begin position="1"/>
        <end position="284"/>
    </location>
</feature>
<feature type="active site" evidence="1">
    <location>
        <position position="10"/>
    </location>
</feature>
<feature type="active site" evidence="1">
    <location>
        <position position="134"/>
    </location>
</feature>
<feature type="binding site" evidence="1">
    <location>
        <begin position="92"/>
        <end position="102"/>
    </location>
    <ligand>
        <name>ATP</name>
        <dbReference type="ChEBI" id="CHEBI:30616"/>
    </ligand>
</feature>
<gene>
    <name evidence="1" type="primary">ispE</name>
    <name type="ordered locus">SRU_0689</name>
</gene>
<accession>Q2S4Q4</accession>
<organism>
    <name type="scientific">Salinibacter ruber (strain DSM 13855 / M31)</name>
    <dbReference type="NCBI Taxonomy" id="309807"/>
    <lineage>
        <taxon>Bacteria</taxon>
        <taxon>Pseudomonadati</taxon>
        <taxon>Rhodothermota</taxon>
        <taxon>Rhodothermia</taxon>
        <taxon>Rhodothermales</taxon>
        <taxon>Salinibacteraceae</taxon>
        <taxon>Salinibacter</taxon>
    </lineage>
</organism>